<proteinExistence type="inferred from homology"/>
<reference key="1">
    <citation type="journal article" date="2005" name="PLoS Biol.">
        <title>Major structural differences and novel potential virulence mechanisms from the genomes of multiple Campylobacter species.</title>
        <authorList>
            <person name="Fouts D.E."/>
            <person name="Mongodin E.F."/>
            <person name="Mandrell R.E."/>
            <person name="Miller W.G."/>
            <person name="Rasko D.A."/>
            <person name="Ravel J."/>
            <person name="Brinkac L.M."/>
            <person name="DeBoy R.T."/>
            <person name="Parker C.T."/>
            <person name="Daugherty S.C."/>
            <person name="Dodson R.J."/>
            <person name="Durkin A.S."/>
            <person name="Madupu R."/>
            <person name="Sullivan S.A."/>
            <person name="Shetty J.U."/>
            <person name="Ayodeji M.A."/>
            <person name="Shvartsbeyn A."/>
            <person name="Schatz M.C."/>
            <person name="Badger J.H."/>
            <person name="Fraser C.M."/>
            <person name="Nelson K.E."/>
        </authorList>
    </citation>
    <scope>NUCLEOTIDE SEQUENCE [LARGE SCALE GENOMIC DNA]</scope>
    <source>
        <strain>RM1221</strain>
    </source>
</reference>
<feature type="chain" id="PRO_0000374754" description="Ribosomal protein uS12 methylthiotransferase RimO">
    <location>
        <begin position="1"/>
        <end position="439"/>
    </location>
</feature>
<feature type="domain" description="MTTase N-terminal" evidence="1">
    <location>
        <begin position="2"/>
        <end position="114"/>
    </location>
</feature>
<feature type="domain" description="Radical SAM core" evidence="2">
    <location>
        <begin position="132"/>
        <end position="363"/>
    </location>
</feature>
<feature type="binding site" evidence="1">
    <location>
        <position position="11"/>
    </location>
    <ligand>
        <name>[4Fe-4S] cluster</name>
        <dbReference type="ChEBI" id="CHEBI:49883"/>
        <label>1</label>
    </ligand>
</feature>
<feature type="binding site" evidence="1">
    <location>
        <position position="45"/>
    </location>
    <ligand>
        <name>[4Fe-4S] cluster</name>
        <dbReference type="ChEBI" id="CHEBI:49883"/>
        <label>1</label>
    </ligand>
</feature>
<feature type="binding site" evidence="1">
    <location>
        <position position="77"/>
    </location>
    <ligand>
        <name>[4Fe-4S] cluster</name>
        <dbReference type="ChEBI" id="CHEBI:49883"/>
        <label>1</label>
    </ligand>
</feature>
<feature type="binding site" evidence="1">
    <location>
        <position position="146"/>
    </location>
    <ligand>
        <name>[4Fe-4S] cluster</name>
        <dbReference type="ChEBI" id="CHEBI:49883"/>
        <label>2</label>
        <note>4Fe-4S-S-AdoMet</note>
    </ligand>
</feature>
<feature type="binding site" evidence="1">
    <location>
        <position position="150"/>
    </location>
    <ligand>
        <name>[4Fe-4S] cluster</name>
        <dbReference type="ChEBI" id="CHEBI:49883"/>
        <label>2</label>
        <note>4Fe-4S-S-AdoMet</note>
    </ligand>
</feature>
<feature type="binding site" evidence="1">
    <location>
        <position position="153"/>
    </location>
    <ligand>
        <name>[4Fe-4S] cluster</name>
        <dbReference type="ChEBI" id="CHEBI:49883"/>
        <label>2</label>
        <note>4Fe-4S-S-AdoMet</note>
    </ligand>
</feature>
<comment type="function">
    <text evidence="1">Catalyzes the methylthiolation of an aspartic acid residue of ribosomal protein uS12.</text>
</comment>
<comment type="catalytic activity">
    <reaction evidence="1">
        <text>L-aspartate(89)-[ribosomal protein uS12]-hydrogen + (sulfur carrier)-SH + AH2 + 2 S-adenosyl-L-methionine = 3-methylsulfanyl-L-aspartate(89)-[ribosomal protein uS12]-hydrogen + (sulfur carrier)-H + 5'-deoxyadenosine + L-methionine + A + S-adenosyl-L-homocysteine + 2 H(+)</text>
        <dbReference type="Rhea" id="RHEA:37087"/>
        <dbReference type="Rhea" id="RHEA-COMP:10460"/>
        <dbReference type="Rhea" id="RHEA-COMP:10461"/>
        <dbReference type="Rhea" id="RHEA-COMP:14737"/>
        <dbReference type="Rhea" id="RHEA-COMP:14739"/>
        <dbReference type="ChEBI" id="CHEBI:13193"/>
        <dbReference type="ChEBI" id="CHEBI:15378"/>
        <dbReference type="ChEBI" id="CHEBI:17319"/>
        <dbReference type="ChEBI" id="CHEBI:17499"/>
        <dbReference type="ChEBI" id="CHEBI:29917"/>
        <dbReference type="ChEBI" id="CHEBI:29961"/>
        <dbReference type="ChEBI" id="CHEBI:57844"/>
        <dbReference type="ChEBI" id="CHEBI:57856"/>
        <dbReference type="ChEBI" id="CHEBI:59789"/>
        <dbReference type="ChEBI" id="CHEBI:64428"/>
        <dbReference type="ChEBI" id="CHEBI:73599"/>
        <dbReference type="EC" id="2.8.4.4"/>
    </reaction>
</comment>
<comment type="cofactor">
    <cofactor evidence="1">
        <name>[4Fe-4S] cluster</name>
        <dbReference type="ChEBI" id="CHEBI:49883"/>
    </cofactor>
    <text evidence="1">Binds 2 [4Fe-4S] clusters. One cluster is coordinated with 3 cysteines and an exchangeable S-adenosyl-L-methionine.</text>
</comment>
<comment type="subcellular location">
    <subcellularLocation>
        <location evidence="1">Cytoplasm</location>
    </subcellularLocation>
</comment>
<comment type="similarity">
    <text evidence="1">Belongs to the methylthiotransferase family. RimO subfamily.</text>
</comment>
<evidence type="ECO:0000255" key="1">
    <source>
        <dbReference type="HAMAP-Rule" id="MF_01865"/>
    </source>
</evidence>
<evidence type="ECO:0000255" key="2">
    <source>
        <dbReference type="PROSITE-ProRule" id="PRU01266"/>
    </source>
</evidence>
<keyword id="KW-0004">4Fe-4S</keyword>
<keyword id="KW-0963">Cytoplasm</keyword>
<keyword id="KW-0408">Iron</keyword>
<keyword id="KW-0411">Iron-sulfur</keyword>
<keyword id="KW-0479">Metal-binding</keyword>
<keyword id="KW-0949">S-adenosyl-L-methionine</keyword>
<keyword id="KW-0808">Transferase</keyword>
<dbReference type="EC" id="2.8.4.4" evidence="1"/>
<dbReference type="EMBL" id="CP000025">
    <property type="protein sequence ID" value="AAW36060.1"/>
    <property type="molecule type" value="Genomic_DNA"/>
</dbReference>
<dbReference type="RefSeq" id="WP_011049982.1">
    <property type="nucleotide sequence ID" value="NC_003912.7"/>
</dbReference>
<dbReference type="SMR" id="Q5HSX7"/>
<dbReference type="KEGG" id="cjr:CJE1627"/>
<dbReference type="HOGENOM" id="CLU_018697_0_1_7"/>
<dbReference type="GO" id="GO:0005829">
    <property type="term" value="C:cytosol"/>
    <property type="evidence" value="ECO:0007669"/>
    <property type="project" value="TreeGrafter"/>
</dbReference>
<dbReference type="GO" id="GO:0051539">
    <property type="term" value="F:4 iron, 4 sulfur cluster binding"/>
    <property type="evidence" value="ECO:0007669"/>
    <property type="project" value="UniProtKB-UniRule"/>
</dbReference>
<dbReference type="GO" id="GO:0035599">
    <property type="term" value="F:aspartic acid methylthiotransferase activity"/>
    <property type="evidence" value="ECO:0007669"/>
    <property type="project" value="TreeGrafter"/>
</dbReference>
<dbReference type="GO" id="GO:0046872">
    <property type="term" value="F:metal ion binding"/>
    <property type="evidence" value="ECO:0007669"/>
    <property type="project" value="UniProtKB-KW"/>
</dbReference>
<dbReference type="GO" id="GO:0103039">
    <property type="term" value="F:protein methylthiotransferase activity"/>
    <property type="evidence" value="ECO:0007669"/>
    <property type="project" value="UniProtKB-EC"/>
</dbReference>
<dbReference type="GO" id="GO:0006400">
    <property type="term" value="P:tRNA modification"/>
    <property type="evidence" value="ECO:0007669"/>
    <property type="project" value="InterPro"/>
</dbReference>
<dbReference type="CDD" id="cd01335">
    <property type="entry name" value="Radical_SAM"/>
    <property type="match status" value="1"/>
</dbReference>
<dbReference type="Gene3D" id="3.40.50.12160">
    <property type="entry name" value="Methylthiotransferase, N-terminal domain"/>
    <property type="match status" value="1"/>
</dbReference>
<dbReference type="Gene3D" id="3.80.30.20">
    <property type="entry name" value="tm_1862 like domain"/>
    <property type="match status" value="1"/>
</dbReference>
<dbReference type="HAMAP" id="MF_01865">
    <property type="entry name" value="MTTase_RimO"/>
    <property type="match status" value="1"/>
</dbReference>
<dbReference type="InterPro" id="IPR006638">
    <property type="entry name" value="Elp3/MiaA/NifB-like_rSAM"/>
</dbReference>
<dbReference type="InterPro" id="IPR005839">
    <property type="entry name" value="Methylthiotransferase"/>
</dbReference>
<dbReference type="InterPro" id="IPR020612">
    <property type="entry name" value="Methylthiotransferase_CS"/>
</dbReference>
<dbReference type="InterPro" id="IPR013848">
    <property type="entry name" value="Methylthiotransferase_N"/>
</dbReference>
<dbReference type="InterPro" id="IPR038135">
    <property type="entry name" value="Methylthiotransferase_N_sf"/>
</dbReference>
<dbReference type="InterPro" id="IPR005840">
    <property type="entry name" value="Ribosomal_uS12_MeSTrfase_RimO"/>
</dbReference>
<dbReference type="InterPro" id="IPR007197">
    <property type="entry name" value="rSAM"/>
</dbReference>
<dbReference type="InterPro" id="IPR023404">
    <property type="entry name" value="rSAM_horseshoe"/>
</dbReference>
<dbReference type="NCBIfam" id="TIGR01125">
    <property type="entry name" value="30S ribosomal protein S12 methylthiotransferase RimO"/>
    <property type="match status" value="1"/>
</dbReference>
<dbReference type="NCBIfam" id="TIGR00089">
    <property type="entry name" value="MiaB/RimO family radical SAM methylthiotransferase"/>
    <property type="match status" value="1"/>
</dbReference>
<dbReference type="PANTHER" id="PTHR43837">
    <property type="entry name" value="RIBOSOMAL PROTEIN S12 METHYLTHIOTRANSFERASE RIMO"/>
    <property type="match status" value="1"/>
</dbReference>
<dbReference type="PANTHER" id="PTHR43837:SF1">
    <property type="entry name" value="RIBOSOMAL PROTEIN US12 METHYLTHIOTRANSFERASE RIMO"/>
    <property type="match status" value="1"/>
</dbReference>
<dbReference type="Pfam" id="PF04055">
    <property type="entry name" value="Radical_SAM"/>
    <property type="match status" value="1"/>
</dbReference>
<dbReference type="Pfam" id="PF00919">
    <property type="entry name" value="UPF0004"/>
    <property type="match status" value="1"/>
</dbReference>
<dbReference type="SFLD" id="SFLDG01082">
    <property type="entry name" value="B12-binding_domain_containing"/>
    <property type="match status" value="1"/>
</dbReference>
<dbReference type="SFLD" id="SFLDG01061">
    <property type="entry name" value="methylthiotransferase"/>
    <property type="match status" value="1"/>
</dbReference>
<dbReference type="SFLD" id="SFLDF00274">
    <property type="entry name" value="ribosomal_protein_S12_methylth"/>
    <property type="match status" value="1"/>
</dbReference>
<dbReference type="SMART" id="SM00729">
    <property type="entry name" value="Elp3"/>
    <property type="match status" value="1"/>
</dbReference>
<dbReference type="SUPFAM" id="SSF102114">
    <property type="entry name" value="Radical SAM enzymes"/>
    <property type="match status" value="1"/>
</dbReference>
<dbReference type="PROSITE" id="PS51449">
    <property type="entry name" value="MTTASE_N"/>
    <property type="match status" value="1"/>
</dbReference>
<dbReference type="PROSITE" id="PS01278">
    <property type="entry name" value="MTTASE_RADICAL"/>
    <property type="match status" value="1"/>
</dbReference>
<dbReference type="PROSITE" id="PS51918">
    <property type="entry name" value="RADICAL_SAM"/>
    <property type="match status" value="1"/>
</dbReference>
<accession>Q5HSX7</accession>
<sequence length="439" mass="49827">MSKLYLMSLGCNKNLVDSEIMLGRLSAYELCDEPSKADVIIVNTCGFIDSAKKESINAILDLHEQRKKDSLLVVTGCLMQRYREELMKELPEVDLFTGVGDYERVDEMILKKTNLFSNSTYLQSENSKRIITGSNSHAFIKIAEGCNQKCSFCAIPSFKGKLKSREISSIIAELKDLVARGYKDFSFIAQDTSSYLFDKGEKDGLIRLIDEVEKIKGIRAARILYLYPTSASEALIKRIIASEIFVNYFDMPLQHISDNMLKIMKRGANSTRLKEMLNLMKSAPNSFLRTGFIVGHPGESEADFEELCEFVKDFGFDRVSVFAYSKEEDTAAFDMEQVSFKVINKRLKIIEKIVNEVIEKSFEKEVGQKRLVVCTGESSEGEFFIAAKDLRWDREIDGEILINESECGNLEMGQIYECEILQNLDKKLLAKALRKVDAN</sequence>
<organism>
    <name type="scientific">Campylobacter jejuni (strain RM1221)</name>
    <dbReference type="NCBI Taxonomy" id="195099"/>
    <lineage>
        <taxon>Bacteria</taxon>
        <taxon>Pseudomonadati</taxon>
        <taxon>Campylobacterota</taxon>
        <taxon>Epsilonproteobacteria</taxon>
        <taxon>Campylobacterales</taxon>
        <taxon>Campylobacteraceae</taxon>
        <taxon>Campylobacter</taxon>
    </lineage>
</organism>
<gene>
    <name evidence="1" type="primary">rimO</name>
    <name type="ordered locus">CJE1627</name>
</gene>
<name>RIMO_CAMJR</name>
<protein>
    <recommendedName>
        <fullName evidence="1">Ribosomal protein uS12 methylthiotransferase RimO</fullName>
        <shortName evidence="1">uS12 MTTase</shortName>
        <shortName evidence="1">uS12 methylthiotransferase</shortName>
        <ecNumber evidence="1">2.8.4.4</ecNumber>
    </recommendedName>
    <alternativeName>
        <fullName evidence="1">Ribosomal protein uS12 (aspartate-C(3))-methylthiotransferase</fullName>
    </alternativeName>
    <alternativeName>
        <fullName evidence="1">Ribosome maturation factor RimO</fullName>
    </alternativeName>
</protein>